<proteinExistence type="evidence at transcript level"/>
<protein>
    <recommendedName>
        <fullName>Zinc finger CCCH domain-containing protein 66</fullName>
        <shortName>OsC3H66</shortName>
    </recommendedName>
</protein>
<sequence length="454" mass="48664">MAAGAGAGGGGGEGDSNGGGTSPGGVSAAAPAIGPHHLGVAAAEEAMWQMTLGGGESMESTPYPERIGEPDCSYYMRTGLCRFGMTCKFNHPPNRKLAVAAARMNGEYPYRVGQPECQYYLKTGTCKFGATCKFHHPREKAALANRVQLNVLGYPMRPNEKECAYYLRTGQCKFASTCKFHHPQPSNTMVAVRNSMYSPGQSATSPGQHTYPGAVTNWTLSRSASFIASPRWPGHSGYAQVIVPQGLVQVPGWNPYAAQMGSSSPDDQQRTPVTTQYYGSRQSETGGMGDHGMYQSYQGGSVPVGVYTVQGENIFPERPDQPECQFYMKTGDCKFGAVCKFHHPKERLVPAPNCALNSLGLPLRPGEPVCTFYSRYGICKFGPNCKFDHPMGTLMYGSATSPRGDVSSMHYQLSPSPGHPGILLDGGSGRSHRVPQSDSQQIPSGDGNAEREAS</sequence>
<accession>Q2QT65</accession>
<accession>B7F3U0</accession>
<evidence type="ECO:0000255" key="1">
    <source>
        <dbReference type="PROSITE-ProRule" id="PRU00723"/>
    </source>
</evidence>
<evidence type="ECO:0000256" key="2">
    <source>
        <dbReference type="SAM" id="MobiDB-lite"/>
    </source>
</evidence>
<evidence type="ECO:0000312" key="3">
    <source>
        <dbReference type="EMBL" id="EEE53085.1"/>
    </source>
</evidence>
<name>C3H66_ORYSJ</name>
<gene>
    <name type="ordered locus">Os12g0405100</name>
    <name type="ordered locus">LOC_Os12g21700</name>
    <name evidence="3" type="ORF">OsJ_35844</name>
</gene>
<keyword id="KW-0238">DNA-binding</keyword>
<keyword id="KW-0479">Metal-binding</keyword>
<keyword id="KW-1185">Reference proteome</keyword>
<keyword id="KW-0677">Repeat</keyword>
<keyword id="KW-0862">Zinc</keyword>
<keyword id="KW-0863">Zinc-finger</keyword>
<reference key="1">
    <citation type="journal article" date="2005" name="BMC Biol.">
        <title>The sequence of rice chromosomes 11 and 12, rich in disease resistance genes and recent gene duplications.</title>
        <authorList>
            <consortium name="The rice chromosomes 11 and 12 sequencing consortia"/>
        </authorList>
    </citation>
    <scope>NUCLEOTIDE SEQUENCE [LARGE SCALE GENOMIC DNA]</scope>
    <source>
        <strain>cv. Nipponbare</strain>
    </source>
</reference>
<reference key="2">
    <citation type="journal article" date="2005" name="Nature">
        <title>The map-based sequence of the rice genome.</title>
        <authorList>
            <consortium name="International rice genome sequencing project (IRGSP)"/>
        </authorList>
    </citation>
    <scope>NUCLEOTIDE SEQUENCE [LARGE SCALE GENOMIC DNA]</scope>
    <source>
        <strain>cv. Nipponbare</strain>
    </source>
</reference>
<reference key="3">
    <citation type="journal article" date="2008" name="Nucleic Acids Res.">
        <title>The rice annotation project database (RAP-DB): 2008 update.</title>
        <authorList>
            <consortium name="The rice annotation project (RAP)"/>
        </authorList>
    </citation>
    <scope>GENOME REANNOTATION</scope>
    <source>
        <strain>cv. Nipponbare</strain>
    </source>
</reference>
<reference key="4">
    <citation type="journal article" date="2013" name="Rice">
        <title>Improvement of the Oryza sativa Nipponbare reference genome using next generation sequence and optical map data.</title>
        <authorList>
            <person name="Kawahara Y."/>
            <person name="de la Bastide M."/>
            <person name="Hamilton J.P."/>
            <person name="Kanamori H."/>
            <person name="McCombie W.R."/>
            <person name="Ouyang S."/>
            <person name="Schwartz D.C."/>
            <person name="Tanaka T."/>
            <person name="Wu J."/>
            <person name="Zhou S."/>
            <person name="Childs K.L."/>
            <person name="Davidson R.M."/>
            <person name="Lin H."/>
            <person name="Quesada-Ocampo L."/>
            <person name="Vaillancourt B."/>
            <person name="Sakai H."/>
            <person name="Lee S.S."/>
            <person name="Kim J."/>
            <person name="Numa H."/>
            <person name="Itoh T."/>
            <person name="Buell C.R."/>
            <person name="Matsumoto T."/>
        </authorList>
    </citation>
    <scope>GENOME REANNOTATION</scope>
    <source>
        <strain>cv. Nipponbare</strain>
    </source>
</reference>
<reference key="5">
    <citation type="journal article" date="2005" name="PLoS Biol.">
        <title>The genomes of Oryza sativa: a history of duplications.</title>
        <authorList>
            <person name="Yu J."/>
            <person name="Wang J."/>
            <person name="Lin W."/>
            <person name="Li S."/>
            <person name="Li H."/>
            <person name="Zhou J."/>
            <person name="Ni P."/>
            <person name="Dong W."/>
            <person name="Hu S."/>
            <person name="Zeng C."/>
            <person name="Zhang J."/>
            <person name="Zhang Y."/>
            <person name="Li R."/>
            <person name="Xu Z."/>
            <person name="Li S."/>
            <person name="Li X."/>
            <person name="Zheng H."/>
            <person name="Cong L."/>
            <person name="Lin L."/>
            <person name="Yin J."/>
            <person name="Geng J."/>
            <person name="Li G."/>
            <person name="Shi J."/>
            <person name="Liu J."/>
            <person name="Lv H."/>
            <person name="Li J."/>
            <person name="Wang J."/>
            <person name="Deng Y."/>
            <person name="Ran L."/>
            <person name="Shi X."/>
            <person name="Wang X."/>
            <person name="Wu Q."/>
            <person name="Li C."/>
            <person name="Ren X."/>
            <person name="Wang J."/>
            <person name="Wang X."/>
            <person name="Li D."/>
            <person name="Liu D."/>
            <person name="Zhang X."/>
            <person name="Ji Z."/>
            <person name="Zhao W."/>
            <person name="Sun Y."/>
            <person name="Zhang Z."/>
            <person name="Bao J."/>
            <person name="Han Y."/>
            <person name="Dong L."/>
            <person name="Ji J."/>
            <person name="Chen P."/>
            <person name="Wu S."/>
            <person name="Liu J."/>
            <person name="Xiao Y."/>
            <person name="Bu D."/>
            <person name="Tan J."/>
            <person name="Yang L."/>
            <person name="Ye C."/>
            <person name="Zhang J."/>
            <person name="Xu J."/>
            <person name="Zhou Y."/>
            <person name="Yu Y."/>
            <person name="Zhang B."/>
            <person name="Zhuang S."/>
            <person name="Wei H."/>
            <person name="Liu B."/>
            <person name="Lei M."/>
            <person name="Yu H."/>
            <person name="Li Y."/>
            <person name="Xu H."/>
            <person name="Wei S."/>
            <person name="He X."/>
            <person name="Fang L."/>
            <person name="Zhang Z."/>
            <person name="Zhang Y."/>
            <person name="Huang X."/>
            <person name="Su Z."/>
            <person name="Tong W."/>
            <person name="Li J."/>
            <person name="Tong Z."/>
            <person name="Li S."/>
            <person name="Ye J."/>
            <person name="Wang L."/>
            <person name="Fang L."/>
            <person name="Lei T."/>
            <person name="Chen C.-S."/>
            <person name="Chen H.-C."/>
            <person name="Xu Z."/>
            <person name="Li H."/>
            <person name="Huang H."/>
            <person name="Zhang F."/>
            <person name="Xu H."/>
            <person name="Li N."/>
            <person name="Zhao C."/>
            <person name="Li S."/>
            <person name="Dong L."/>
            <person name="Huang Y."/>
            <person name="Li L."/>
            <person name="Xi Y."/>
            <person name="Qi Q."/>
            <person name="Li W."/>
            <person name="Zhang B."/>
            <person name="Hu W."/>
            <person name="Zhang Y."/>
            <person name="Tian X."/>
            <person name="Jiao Y."/>
            <person name="Liang X."/>
            <person name="Jin J."/>
            <person name="Gao L."/>
            <person name="Zheng W."/>
            <person name="Hao B."/>
            <person name="Liu S.-M."/>
            <person name="Wang W."/>
            <person name="Yuan L."/>
            <person name="Cao M."/>
            <person name="McDermott J."/>
            <person name="Samudrala R."/>
            <person name="Wang J."/>
            <person name="Wong G.K.-S."/>
            <person name="Yang H."/>
        </authorList>
    </citation>
    <scope>NUCLEOTIDE SEQUENCE [LARGE SCALE GENOMIC DNA]</scope>
    <source>
        <strain>cv. Nipponbare</strain>
    </source>
</reference>
<reference key="6">
    <citation type="journal article" date="2003" name="Science">
        <title>Collection, mapping, and annotation of over 28,000 cDNA clones from japonica rice.</title>
        <authorList>
            <consortium name="The rice full-length cDNA consortium"/>
        </authorList>
    </citation>
    <scope>NUCLEOTIDE SEQUENCE [LARGE SCALE MRNA]</scope>
    <source>
        <strain>cv. Nipponbare</strain>
    </source>
</reference>
<reference key="7">
    <citation type="journal article" date="2008" name="BMC Genomics">
        <title>Genome-wide analysis of CCCH zinc finger family in Arabidopsis and rice.</title>
        <authorList>
            <person name="Wang D."/>
            <person name="Guo Y."/>
            <person name="Wu C."/>
            <person name="Yang G."/>
            <person name="Li Y."/>
            <person name="Zheng C."/>
        </authorList>
    </citation>
    <scope>NOMENCLATURE</scope>
</reference>
<dbReference type="EMBL" id="DP000011">
    <property type="protein sequence ID" value="ABA97542.1"/>
    <property type="molecule type" value="Genomic_DNA"/>
</dbReference>
<dbReference type="EMBL" id="AP008218">
    <property type="protein sequence ID" value="BAF29643.1"/>
    <property type="molecule type" value="Genomic_DNA"/>
</dbReference>
<dbReference type="EMBL" id="AP014968">
    <property type="protein sequence ID" value="BAT16824.1"/>
    <property type="molecule type" value="Genomic_DNA"/>
</dbReference>
<dbReference type="EMBL" id="CM000149">
    <property type="protein sequence ID" value="EEE53085.1"/>
    <property type="molecule type" value="Genomic_DNA"/>
</dbReference>
<dbReference type="EMBL" id="AK111511">
    <property type="protein sequence ID" value="BAG99287.1"/>
    <property type="molecule type" value="mRNA"/>
</dbReference>
<dbReference type="RefSeq" id="XP_015620174.1">
    <property type="nucleotide sequence ID" value="XM_015764688.1"/>
</dbReference>
<dbReference type="FunCoup" id="Q2QT65">
    <property type="interactions" value="762"/>
</dbReference>
<dbReference type="STRING" id="39947.Q2QT65"/>
<dbReference type="PaxDb" id="39947-Q2QT65"/>
<dbReference type="EnsemblPlants" id="Os12t0405100-01">
    <property type="protein sequence ID" value="Os12t0405100-01"/>
    <property type="gene ID" value="Os12g0405100"/>
</dbReference>
<dbReference type="Gramene" id="Os12t0405100-01">
    <property type="protein sequence ID" value="Os12t0405100-01"/>
    <property type="gene ID" value="Os12g0405100"/>
</dbReference>
<dbReference type="KEGG" id="dosa:Os12g0405100"/>
<dbReference type="eggNOG" id="KOG1677">
    <property type="taxonomic scope" value="Eukaryota"/>
</dbReference>
<dbReference type="HOGENOM" id="CLU_033292_2_1_1"/>
<dbReference type="InParanoid" id="Q2QT65"/>
<dbReference type="OMA" id="WNAYRGS"/>
<dbReference type="OrthoDB" id="411372at2759"/>
<dbReference type="Proteomes" id="UP000000763">
    <property type="component" value="Chromosome 12"/>
</dbReference>
<dbReference type="Proteomes" id="UP000007752">
    <property type="component" value="Chromosome 12"/>
</dbReference>
<dbReference type="Proteomes" id="UP000059680">
    <property type="component" value="Chromosome 12"/>
</dbReference>
<dbReference type="GO" id="GO:0003677">
    <property type="term" value="F:DNA binding"/>
    <property type="evidence" value="ECO:0007669"/>
    <property type="project" value="UniProtKB-KW"/>
</dbReference>
<dbReference type="GO" id="GO:0003729">
    <property type="term" value="F:mRNA binding"/>
    <property type="evidence" value="ECO:0000318"/>
    <property type="project" value="GO_Central"/>
</dbReference>
<dbReference type="GO" id="GO:0008270">
    <property type="term" value="F:zinc ion binding"/>
    <property type="evidence" value="ECO:0007669"/>
    <property type="project" value="UniProtKB-KW"/>
</dbReference>
<dbReference type="Gene3D" id="4.10.1000.10">
    <property type="entry name" value="Zinc finger, CCCH-type"/>
    <property type="match status" value="3"/>
</dbReference>
<dbReference type="InterPro" id="IPR050974">
    <property type="entry name" value="Plant_ZF_CCCH"/>
</dbReference>
<dbReference type="InterPro" id="IPR000571">
    <property type="entry name" value="Znf_CCCH"/>
</dbReference>
<dbReference type="InterPro" id="IPR036855">
    <property type="entry name" value="Znf_CCCH_sf"/>
</dbReference>
<dbReference type="PANTHER" id="PTHR12506">
    <property type="entry name" value="PROTEIN PHOSPHATASE RELATED"/>
    <property type="match status" value="1"/>
</dbReference>
<dbReference type="PANTHER" id="PTHR12506:SF25">
    <property type="entry name" value="ZINC FINGER CCCH DOMAIN-CONTAINING PROTEIN 66"/>
    <property type="match status" value="1"/>
</dbReference>
<dbReference type="Pfam" id="PF00642">
    <property type="entry name" value="zf-CCCH"/>
    <property type="match status" value="5"/>
</dbReference>
<dbReference type="SMART" id="SM00356">
    <property type="entry name" value="ZnF_C3H1"/>
    <property type="match status" value="5"/>
</dbReference>
<dbReference type="SUPFAM" id="SSF90229">
    <property type="entry name" value="CCCH zinc finger"/>
    <property type="match status" value="5"/>
</dbReference>
<dbReference type="PROSITE" id="PS50103">
    <property type="entry name" value="ZF_C3H1"/>
    <property type="match status" value="5"/>
</dbReference>
<feature type="chain" id="PRO_0000346857" description="Zinc finger CCCH domain-containing protein 66">
    <location>
        <begin position="1"/>
        <end position="454"/>
    </location>
</feature>
<feature type="zinc finger region" description="C3H1-type 1" evidence="1">
    <location>
        <begin position="66"/>
        <end position="94"/>
    </location>
</feature>
<feature type="zinc finger region" description="C3H1-type 2" evidence="1">
    <location>
        <begin position="111"/>
        <end position="139"/>
    </location>
</feature>
<feature type="zinc finger region" description="C3H1-type 3" evidence="1">
    <location>
        <begin position="157"/>
        <end position="185"/>
    </location>
</feature>
<feature type="zinc finger region" description="C3H1-type 4" evidence="1">
    <location>
        <begin position="318"/>
        <end position="346"/>
    </location>
</feature>
<feature type="zinc finger region" description="C3H1-type 5" evidence="1">
    <location>
        <begin position="364"/>
        <end position="392"/>
    </location>
</feature>
<feature type="region of interest" description="Disordered" evidence="2">
    <location>
        <begin position="1"/>
        <end position="30"/>
    </location>
</feature>
<feature type="region of interest" description="Disordered" evidence="2">
    <location>
        <begin position="405"/>
        <end position="454"/>
    </location>
</feature>
<feature type="compositionally biased region" description="Gly residues" evidence="2">
    <location>
        <begin position="1"/>
        <end position="23"/>
    </location>
</feature>
<feature type="compositionally biased region" description="Polar residues" evidence="2">
    <location>
        <begin position="434"/>
        <end position="443"/>
    </location>
</feature>
<organism>
    <name type="scientific">Oryza sativa subsp. japonica</name>
    <name type="common">Rice</name>
    <dbReference type="NCBI Taxonomy" id="39947"/>
    <lineage>
        <taxon>Eukaryota</taxon>
        <taxon>Viridiplantae</taxon>
        <taxon>Streptophyta</taxon>
        <taxon>Embryophyta</taxon>
        <taxon>Tracheophyta</taxon>
        <taxon>Spermatophyta</taxon>
        <taxon>Magnoliopsida</taxon>
        <taxon>Liliopsida</taxon>
        <taxon>Poales</taxon>
        <taxon>Poaceae</taxon>
        <taxon>BOP clade</taxon>
        <taxon>Oryzoideae</taxon>
        <taxon>Oryzeae</taxon>
        <taxon>Oryzinae</taxon>
        <taxon>Oryza</taxon>
        <taxon>Oryza sativa</taxon>
    </lineage>
</organism>